<evidence type="ECO:0000255" key="1">
    <source>
        <dbReference type="HAMAP-Rule" id="MF_01636"/>
    </source>
</evidence>
<sequence length="488" mass="54686">MQYRDLRDFISGLEQRSELKRIQVPVSPVLEMTEVCDRTLRAKGPALLFENPTGYDIPVLGNLFGTPERVALGMGAEAVSELREIGKLLAFLKEPEPPKGLKDAWSKLPIFRKIISMAPKVVKDAVCQEVVIEGDDVDLGMLPVQTCWPGDVGPLITWGLTVTKGPNKDRQNLGIYRQQVIGRNKVIMRWLSHRGGALDYREWCEKHPGQPFPVSVALGADPATILGAVTPVPDSLSEYAFAGLLRGNRTELVKCRGNDLQVPATAEIILEGVIHPGEMADEGPYGDHTGYYNEVDSFPVFTVERITHRIKPIYHSTYTGRPPDEPAILGVALNEVFVPILQKQFPEITDFYLPPEGCSYRMAVVTMKKQYPGHAKRVMLGVWSFLRQFMYTKFVIVTDDDINARDWNDVIWAITTRMDPKRDTVMIDNTPIDYLDFASPVSGLGSKMGLDATHKWPGETTREWGRVIVKDEAVTRRIDAIWNQLGID</sequence>
<gene>
    <name evidence="1" type="primary">ubiD</name>
    <name type="ordered locus">PFL_5980</name>
</gene>
<comment type="function">
    <text evidence="1">Catalyzes the decarboxylation of 3-octaprenyl-4-hydroxy benzoate to 2-octaprenylphenol, an intermediate step in ubiquinone biosynthesis.</text>
</comment>
<comment type="catalytic activity">
    <reaction evidence="1">
        <text>a 4-hydroxy-3-(all-trans-polyprenyl)benzoate + H(+) = a 2-(all-trans-polyprenyl)phenol + CO2</text>
        <dbReference type="Rhea" id="RHEA:41680"/>
        <dbReference type="Rhea" id="RHEA-COMP:9514"/>
        <dbReference type="Rhea" id="RHEA-COMP:9516"/>
        <dbReference type="ChEBI" id="CHEBI:1269"/>
        <dbReference type="ChEBI" id="CHEBI:15378"/>
        <dbReference type="ChEBI" id="CHEBI:16526"/>
        <dbReference type="ChEBI" id="CHEBI:78396"/>
        <dbReference type="EC" id="4.1.1.98"/>
    </reaction>
</comment>
<comment type="cofactor">
    <cofactor evidence="1">
        <name>prenylated FMN</name>
        <dbReference type="ChEBI" id="CHEBI:87746"/>
    </cofactor>
    <text evidence="1">Binds 1 prenylated FMN per subunit.</text>
</comment>
<comment type="cofactor">
    <cofactor evidence="1">
        <name>Mn(2+)</name>
        <dbReference type="ChEBI" id="CHEBI:29035"/>
    </cofactor>
</comment>
<comment type="pathway">
    <text evidence="1">Cofactor biosynthesis; ubiquinone biosynthesis.</text>
</comment>
<comment type="subunit">
    <text evidence="1">Homohexamer.</text>
</comment>
<comment type="subcellular location">
    <subcellularLocation>
        <location evidence="1">Cell membrane</location>
        <topology evidence="1">Peripheral membrane protein</topology>
    </subcellularLocation>
</comment>
<comment type="similarity">
    <text evidence="1">Belongs to the UbiD family.</text>
</comment>
<accession>Q4K3Z5</accession>
<reference key="1">
    <citation type="journal article" date="2005" name="Nat. Biotechnol.">
        <title>Complete genome sequence of the plant commensal Pseudomonas fluorescens Pf-5.</title>
        <authorList>
            <person name="Paulsen I.T."/>
            <person name="Press C.M."/>
            <person name="Ravel J."/>
            <person name="Kobayashi D.Y."/>
            <person name="Myers G.S.A."/>
            <person name="Mavrodi D.V."/>
            <person name="DeBoy R.T."/>
            <person name="Seshadri R."/>
            <person name="Ren Q."/>
            <person name="Madupu R."/>
            <person name="Dodson R.J."/>
            <person name="Durkin A.S."/>
            <person name="Brinkac L.M."/>
            <person name="Daugherty S.C."/>
            <person name="Sullivan S.A."/>
            <person name="Rosovitz M.J."/>
            <person name="Gwinn M.L."/>
            <person name="Zhou L."/>
            <person name="Schneider D.J."/>
            <person name="Cartinhour S.W."/>
            <person name="Nelson W.C."/>
            <person name="Weidman J."/>
            <person name="Watkins K."/>
            <person name="Tran K."/>
            <person name="Khouri H."/>
            <person name="Pierson E.A."/>
            <person name="Pierson L.S. III"/>
            <person name="Thomashow L.S."/>
            <person name="Loper J.E."/>
        </authorList>
    </citation>
    <scope>NUCLEOTIDE SEQUENCE [LARGE SCALE GENOMIC DNA]</scope>
    <source>
        <strain>ATCC BAA-477 / NRRL B-23932 / Pf-5</strain>
    </source>
</reference>
<feature type="chain" id="PRO_0000267680" description="3-octaprenyl-4-hydroxybenzoate carboxy-lyase">
    <location>
        <begin position="1"/>
        <end position="488"/>
    </location>
</feature>
<feature type="active site" description="Proton donor" evidence="1">
    <location>
        <position position="287"/>
    </location>
</feature>
<feature type="binding site" evidence="1">
    <location>
        <position position="172"/>
    </location>
    <ligand>
        <name>Mn(2+)</name>
        <dbReference type="ChEBI" id="CHEBI:29035"/>
    </ligand>
</feature>
<feature type="binding site" evidence="1">
    <location>
        <begin position="175"/>
        <end position="177"/>
    </location>
    <ligand>
        <name>prenylated FMN</name>
        <dbReference type="ChEBI" id="CHEBI:87746"/>
    </ligand>
</feature>
<feature type="binding site" evidence="1">
    <location>
        <begin position="189"/>
        <end position="191"/>
    </location>
    <ligand>
        <name>prenylated FMN</name>
        <dbReference type="ChEBI" id="CHEBI:87746"/>
    </ligand>
</feature>
<feature type="binding site" evidence="1">
    <location>
        <begin position="194"/>
        <end position="195"/>
    </location>
    <ligand>
        <name>prenylated FMN</name>
        <dbReference type="ChEBI" id="CHEBI:87746"/>
    </ligand>
</feature>
<feature type="binding site" evidence="1">
    <location>
        <position position="238"/>
    </location>
    <ligand>
        <name>Mn(2+)</name>
        <dbReference type="ChEBI" id="CHEBI:29035"/>
    </ligand>
</feature>
<protein>
    <recommendedName>
        <fullName evidence="1">3-octaprenyl-4-hydroxybenzoate carboxy-lyase</fullName>
        <ecNumber evidence="1">4.1.1.98</ecNumber>
    </recommendedName>
    <alternativeName>
        <fullName evidence="1">Polyprenyl p-hydroxybenzoate decarboxylase</fullName>
    </alternativeName>
</protein>
<proteinExistence type="inferred from homology"/>
<name>UBID_PSEF5</name>
<keyword id="KW-1003">Cell membrane</keyword>
<keyword id="KW-0210">Decarboxylase</keyword>
<keyword id="KW-0285">Flavoprotein</keyword>
<keyword id="KW-0288">FMN</keyword>
<keyword id="KW-0456">Lyase</keyword>
<keyword id="KW-0464">Manganese</keyword>
<keyword id="KW-0472">Membrane</keyword>
<keyword id="KW-0479">Metal-binding</keyword>
<keyword id="KW-0831">Ubiquinone biosynthesis</keyword>
<organism>
    <name type="scientific">Pseudomonas fluorescens (strain ATCC BAA-477 / NRRL B-23932 / Pf-5)</name>
    <dbReference type="NCBI Taxonomy" id="220664"/>
    <lineage>
        <taxon>Bacteria</taxon>
        <taxon>Pseudomonadati</taxon>
        <taxon>Pseudomonadota</taxon>
        <taxon>Gammaproteobacteria</taxon>
        <taxon>Pseudomonadales</taxon>
        <taxon>Pseudomonadaceae</taxon>
        <taxon>Pseudomonas</taxon>
    </lineage>
</organism>
<dbReference type="EC" id="4.1.1.98" evidence="1"/>
<dbReference type="EMBL" id="CP000076">
    <property type="protein sequence ID" value="AAY95170.1"/>
    <property type="molecule type" value="Genomic_DNA"/>
</dbReference>
<dbReference type="RefSeq" id="WP_011064155.1">
    <property type="nucleotide sequence ID" value="NC_004129.6"/>
</dbReference>
<dbReference type="SMR" id="Q4K3Z5"/>
<dbReference type="STRING" id="220664.PFL_5980"/>
<dbReference type="GeneID" id="57478938"/>
<dbReference type="KEGG" id="pfl:PFL_5980"/>
<dbReference type="PATRIC" id="fig|220664.5.peg.6099"/>
<dbReference type="eggNOG" id="COG0043">
    <property type="taxonomic scope" value="Bacteria"/>
</dbReference>
<dbReference type="HOGENOM" id="CLU_023348_4_1_6"/>
<dbReference type="UniPathway" id="UPA00232"/>
<dbReference type="Proteomes" id="UP000008540">
    <property type="component" value="Chromosome"/>
</dbReference>
<dbReference type="GO" id="GO:0005829">
    <property type="term" value="C:cytosol"/>
    <property type="evidence" value="ECO:0007669"/>
    <property type="project" value="TreeGrafter"/>
</dbReference>
<dbReference type="GO" id="GO:0005886">
    <property type="term" value="C:plasma membrane"/>
    <property type="evidence" value="ECO:0007669"/>
    <property type="project" value="UniProtKB-SubCell"/>
</dbReference>
<dbReference type="GO" id="GO:0008694">
    <property type="term" value="F:3-octaprenyl-4-hydroxybenzoate carboxy-lyase activity"/>
    <property type="evidence" value="ECO:0007669"/>
    <property type="project" value="UniProtKB-UniRule"/>
</dbReference>
<dbReference type="GO" id="GO:0046872">
    <property type="term" value="F:metal ion binding"/>
    <property type="evidence" value="ECO:0007669"/>
    <property type="project" value="UniProtKB-KW"/>
</dbReference>
<dbReference type="GO" id="GO:0006744">
    <property type="term" value="P:ubiquinone biosynthetic process"/>
    <property type="evidence" value="ECO:0007669"/>
    <property type="project" value="UniProtKB-UniRule"/>
</dbReference>
<dbReference type="FunFam" id="1.20.5.570:FF:000001">
    <property type="entry name" value="3-octaprenyl-4-hydroxybenzoate carboxy-lyase"/>
    <property type="match status" value="1"/>
</dbReference>
<dbReference type="FunFam" id="3.40.1670.10:FF:000001">
    <property type="entry name" value="3-octaprenyl-4-hydroxybenzoate carboxy-lyase"/>
    <property type="match status" value="1"/>
</dbReference>
<dbReference type="Gene3D" id="1.20.5.570">
    <property type="entry name" value="Single helix bin"/>
    <property type="match status" value="1"/>
</dbReference>
<dbReference type="Gene3D" id="3.40.1670.10">
    <property type="entry name" value="UbiD C-terminal domain-like"/>
    <property type="match status" value="1"/>
</dbReference>
<dbReference type="HAMAP" id="MF_01636">
    <property type="entry name" value="UbiD"/>
    <property type="match status" value="1"/>
</dbReference>
<dbReference type="InterPro" id="IPR002830">
    <property type="entry name" value="UbiD"/>
</dbReference>
<dbReference type="InterPro" id="IPR049381">
    <property type="entry name" value="UbiD-like_C"/>
</dbReference>
<dbReference type="InterPro" id="IPR049383">
    <property type="entry name" value="UbiD-like_N"/>
</dbReference>
<dbReference type="InterPro" id="IPR023677">
    <property type="entry name" value="UbiD_bacteria"/>
</dbReference>
<dbReference type="InterPro" id="IPR048304">
    <property type="entry name" value="UbiD_Rift_dom"/>
</dbReference>
<dbReference type="NCBIfam" id="NF008175">
    <property type="entry name" value="PRK10922.1"/>
    <property type="match status" value="1"/>
</dbReference>
<dbReference type="NCBIfam" id="TIGR00148">
    <property type="entry name" value="UbiD family decarboxylase"/>
    <property type="match status" value="1"/>
</dbReference>
<dbReference type="PANTHER" id="PTHR30108">
    <property type="entry name" value="3-OCTAPRENYL-4-HYDROXYBENZOATE CARBOXY-LYASE-RELATED"/>
    <property type="match status" value="1"/>
</dbReference>
<dbReference type="PANTHER" id="PTHR30108:SF17">
    <property type="entry name" value="FERULIC ACID DECARBOXYLASE 1"/>
    <property type="match status" value="1"/>
</dbReference>
<dbReference type="Pfam" id="PF01977">
    <property type="entry name" value="UbiD"/>
    <property type="match status" value="1"/>
</dbReference>
<dbReference type="Pfam" id="PF20696">
    <property type="entry name" value="UbiD_C"/>
    <property type="match status" value="1"/>
</dbReference>
<dbReference type="Pfam" id="PF20695">
    <property type="entry name" value="UbiD_N"/>
    <property type="match status" value="1"/>
</dbReference>
<dbReference type="SUPFAM" id="SSF50475">
    <property type="entry name" value="FMN-binding split barrel"/>
    <property type="match status" value="1"/>
</dbReference>
<dbReference type="SUPFAM" id="SSF143968">
    <property type="entry name" value="UbiD C-terminal domain-like"/>
    <property type="match status" value="1"/>
</dbReference>